<proteinExistence type="inferred from homology"/>
<reference key="1">
    <citation type="journal article" date="2006" name="Nat. Biotechnol.">
        <title>Complete genome of the mutualistic, N2-fixing grass endophyte Azoarcus sp. strain BH72.</title>
        <authorList>
            <person name="Krause A."/>
            <person name="Ramakumar A."/>
            <person name="Bartels D."/>
            <person name="Battistoni F."/>
            <person name="Bekel T."/>
            <person name="Boch J."/>
            <person name="Boehm M."/>
            <person name="Friedrich F."/>
            <person name="Hurek T."/>
            <person name="Krause L."/>
            <person name="Linke B."/>
            <person name="McHardy A.C."/>
            <person name="Sarkar A."/>
            <person name="Schneiker S."/>
            <person name="Syed A.A."/>
            <person name="Thauer R."/>
            <person name="Vorhoelter F.-J."/>
            <person name="Weidner S."/>
            <person name="Puehler A."/>
            <person name="Reinhold-Hurek B."/>
            <person name="Kaiser O."/>
            <person name="Goesmann A."/>
        </authorList>
    </citation>
    <scope>NUCLEOTIDE SEQUENCE [LARGE SCALE GENOMIC DNA]</scope>
    <source>
        <strain>BH72</strain>
    </source>
</reference>
<evidence type="ECO:0000255" key="1">
    <source>
        <dbReference type="HAMAP-Rule" id="MF_00598"/>
    </source>
</evidence>
<protein>
    <recommendedName>
        <fullName evidence="1">Protein Smg homolog</fullName>
    </recommendedName>
</protein>
<name>SMG_AZOSB</name>
<accession>A1K1K9</accession>
<comment type="similarity">
    <text evidence="1">Belongs to the Smg family.</text>
</comment>
<organism>
    <name type="scientific">Azoarcus sp. (strain BH72)</name>
    <dbReference type="NCBI Taxonomy" id="418699"/>
    <lineage>
        <taxon>Bacteria</taxon>
        <taxon>Pseudomonadati</taxon>
        <taxon>Pseudomonadota</taxon>
        <taxon>Betaproteobacteria</taxon>
        <taxon>Rhodocyclales</taxon>
        <taxon>Zoogloeaceae</taxon>
        <taxon>Azoarcus</taxon>
    </lineage>
</organism>
<feature type="chain" id="PRO_1000025645" description="Protein Smg homolog">
    <location>
        <begin position="1"/>
        <end position="155"/>
    </location>
</feature>
<keyword id="KW-1185">Reference proteome</keyword>
<gene>
    <name evidence="1" type="primary">smg</name>
    <name type="ordered locus">azo0096</name>
</gene>
<dbReference type="EMBL" id="AM406670">
    <property type="protein sequence ID" value="CAL92714.1"/>
    <property type="molecule type" value="Genomic_DNA"/>
</dbReference>
<dbReference type="RefSeq" id="WP_011763833.1">
    <property type="nucleotide sequence ID" value="NC_008702.1"/>
</dbReference>
<dbReference type="SMR" id="A1K1K9"/>
<dbReference type="STRING" id="62928.azo0096"/>
<dbReference type="KEGG" id="aoa:dqs_0106"/>
<dbReference type="KEGG" id="azo:azo0096"/>
<dbReference type="eggNOG" id="COG2922">
    <property type="taxonomic scope" value="Bacteria"/>
</dbReference>
<dbReference type="HOGENOM" id="CLU_133242_0_0_4"/>
<dbReference type="OrthoDB" id="5297467at2"/>
<dbReference type="Proteomes" id="UP000002588">
    <property type="component" value="Chromosome"/>
</dbReference>
<dbReference type="HAMAP" id="MF_00598">
    <property type="entry name" value="Smg"/>
    <property type="match status" value="1"/>
</dbReference>
<dbReference type="InterPro" id="IPR007456">
    <property type="entry name" value="Smg"/>
</dbReference>
<dbReference type="PANTHER" id="PTHR38692">
    <property type="entry name" value="PROTEIN SMG"/>
    <property type="match status" value="1"/>
</dbReference>
<dbReference type="PANTHER" id="PTHR38692:SF1">
    <property type="entry name" value="PROTEIN SMG"/>
    <property type="match status" value="1"/>
</dbReference>
<dbReference type="Pfam" id="PF04361">
    <property type="entry name" value="DUF494"/>
    <property type="match status" value="1"/>
</dbReference>
<sequence length="155" mass="17156">MFDILVYLFESYIHANACPASDQLARKLSAAGFEDEEINEALDWLAGLRRVAAETHPCVAPSRSAVRLYSDYECTRLSAACRGFLTFLEGAGVLDAVSRELIVERAVALSNFTITLGRLKVIVLMVLWQREQPVDTLIIDELLSSDDDEGAPLLH</sequence>